<name>ALG8_AZOVI</name>
<proteinExistence type="inferred from homology"/>
<organism>
    <name type="scientific">Azotobacter vinelandii</name>
    <dbReference type="NCBI Taxonomy" id="354"/>
    <lineage>
        <taxon>Bacteria</taxon>
        <taxon>Pseudomonadati</taxon>
        <taxon>Pseudomonadota</taxon>
        <taxon>Gammaproteobacteria</taxon>
        <taxon>Pseudomonadales</taxon>
        <taxon>Pseudomonadaceae</taxon>
        <taxon>Azotobacter</taxon>
    </lineage>
</organism>
<gene>
    <name type="primary">alg8</name>
</gene>
<dbReference type="EC" id="2.4.-.-"/>
<dbReference type="EMBL" id="Y08819">
    <property type="protein sequence ID" value="CAA70053.1"/>
    <property type="molecule type" value="Genomic_DNA"/>
</dbReference>
<dbReference type="CAZy" id="GT2">
    <property type="family name" value="Glycosyltransferase Family 2"/>
</dbReference>
<dbReference type="UniPathway" id="UPA00286"/>
<dbReference type="GO" id="GO:0005886">
    <property type="term" value="C:plasma membrane"/>
    <property type="evidence" value="ECO:0007669"/>
    <property type="project" value="UniProtKB-SubCell"/>
</dbReference>
<dbReference type="GO" id="GO:0050501">
    <property type="term" value="F:hyaluronan synthase activity"/>
    <property type="evidence" value="ECO:0007669"/>
    <property type="project" value="TreeGrafter"/>
</dbReference>
<dbReference type="GO" id="GO:0042121">
    <property type="term" value="P:alginic acid biosynthetic process"/>
    <property type="evidence" value="ECO:0007669"/>
    <property type="project" value="UniProtKB-UniPathway"/>
</dbReference>
<dbReference type="GO" id="GO:0085029">
    <property type="term" value="P:extracellular matrix assembly"/>
    <property type="evidence" value="ECO:0007669"/>
    <property type="project" value="TreeGrafter"/>
</dbReference>
<dbReference type="GO" id="GO:0030213">
    <property type="term" value="P:hyaluronan biosynthetic process"/>
    <property type="evidence" value="ECO:0007669"/>
    <property type="project" value="TreeGrafter"/>
</dbReference>
<dbReference type="InterPro" id="IPR029044">
    <property type="entry name" value="Nucleotide-diphossugar_trans"/>
</dbReference>
<dbReference type="PANTHER" id="PTHR22913">
    <property type="entry name" value="HYALURONAN SYNTHASE"/>
    <property type="match status" value="1"/>
</dbReference>
<dbReference type="PANTHER" id="PTHR22913:SF12">
    <property type="entry name" value="MANNURONAN SYNTHASE"/>
    <property type="match status" value="1"/>
</dbReference>
<dbReference type="Pfam" id="PF13641">
    <property type="entry name" value="Glyco_tranf_2_3"/>
    <property type="match status" value="1"/>
</dbReference>
<dbReference type="SUPFAM" id="SSF53448">
    <property type="entry name" value="Nucleotide-diphospho-sugar transferases"/>
    <property type="match status" value="1"/>
</dbReference>
<reference key="1">
    <citation type="journal article" date="1997" name="Gene">
        <title>The Azotobacter vinelandii alg8 and alg44 genes are essential for alginate synthesis and can be transcribed from an algD-independent promoter.</title>
        <authorList>
            <person name="Mejia-Ruiz H."/>
            <person name="Guzman J."/>
            <person name="Moreno S."/>
            <person name="Soberon-Chavez G."/>
            <person name="Espin G."/>
        </authorList>
    </citation>
    <scope>NUCLEOTIDE SEQUENCE [GENOMIC DNA]</scope>
    <source>
        <strain>ATCC 9046</strain>
    </source>
</reference>
<sequence>MDRLKHALGEATGWLLFLSFLMLVAVALPPQVFDPESKHFIMLIGLIGVWRYSMGIIHFLRGMLFLYVVYPYYRRKVEKLGKDADPSHVFLMVTSFRIDALTTGKVYGSVIKEAINCGYPTTVVCSIVEMSDELLIKSLWEKLDPPDRVKLDFVRIAGTGKRDGLANGFRAISRHMPDEDAVVAVIDGDTVLNEGVVRKTVPLFQDLPQHGWPDHQRILRSAGRLRHERVAQVRFAQRHINMCSMALSHRVLTLTGRMSVFRAVVTDPEFIVDVENDNLDHWRLGRFKFLTGDDKSSWFSLMRLGYDTFYVPDASIHTVEHPPEKRFVKASRKLMFRWYGNNLRQNSRALKLGVQRLGWFTSVVLFDQRVSMWTSLLGLTVAIIGSIKYSIAIFIAYLLWVCSTRLVLTLLLSLSGHPIGPAYPLILYYNQIVGAVVKIHVFFRLDQQSWTRQDTKLNRELASFQSWFNNWSSKAMTFSATSIFIAVLMLSV</sequence>
<accession>P94199</accession>
<evidence type="ECO:0000255" key="1"/>
<evidence type="ECO:0000305" key="2"/>
<protein>
    <recommendedName>
        <fullName>Glycosyltransferase alg8</fullName>
        <ecNumber>2.4.-.-</ecNumber>
    </recommendedName>
</protein>
<keyword id="KW-0016">Alginate biosynthesis</keyword>
<keyword id="KW-1003">Cell membrane</keyword>
<keyword id="KW-0328">Glycosyltransferase</keyword>
<keyword id="KW-0472">Membrane</keyword>
<keyword id="KW-0808">Transferase</keyword>
<keyword id="KW-0812">Transmembrane</keyword>
<keyword id="KW-1133">Transmembrane helix</keyword>
<feature type="chain" id="PRO_0000059253" description="Glycosyltransferase alg8">
    <location>
        <begin position="1"/>
        <end position="492"/>
    </location>
</feature>
<feature type="transmembrane region" description="Helical" evidence="1">
    <location>
        <begin position="13"/>
        <end position="32"/>
    </location>
</feature>
<feature type="transmembrane region" description="Helical" evidence="1">
    <location>
        <begin position="47"/>
        <end position="69"/>
    </location>
</feature>
<feature type="transmembrane region" description="Helical" evidence="1">
    <location>
        <begin position="379"/>
        <end position="401"/>
    </location>
</feature>
<feature type="transmembrane region" description="Helical" evidence="1">
    <location>
        <begin position="421"/>
        <end position="443"/>
    </location>
</feature>
<comment type="function">
    <text>Possibly a processive enzyme that polymerizes GDP-mannuronic acid.</text>
</comment>
<comment type="pathway">
    <text>Glycan biosynthesis; alginate biosynthesis.</text>
</comment>
<comment type="subcellular location">
    <subcellularLocation>
        <location evidence="2">Cell membrane</location>
        <topology evidence="2">Multi-pass membrane protein</topology>
    </subcellularLocation>
</comment>
<comment type="similarity">
    <text evidence="2">Belongs to the glycosyltransferase 2 family.</text>
</comment>